<evidence type="ECO:0000255" key="1"/>
<evidence type="ECO:0000255" key="2">
    <source>
        <dbReference type="PROSITE-ProRule" id="PRU00434"/>
    </source>
</evidence>
<evidence type="ECO:0000256" key="3">
    <source>
        <dbReference type="SAM" id="MobiDB-lite"/>
    </source>
</evidence>
<evidence type="ECO:0000269" key="4">
    <source>
    </source>
</evidence>
<evidence type="ECO:0000305" key="5"/>
<feature type="chain" id="PRO_0000362140" description="ATP-binding cassette transporter pdr1">
    <location>
        <begin position="1"/>
        <end position="1396"/>
    </location>
</feature>
<feature type="transmembrane region" description="Helical" evidence="1">
    <location>
        <begin position="431"/>
        <end position="451"/>
    </location>
</feature>
<feature type="transmembrane region" description="Helical" evidence="1">
    <location>
        <begin position="466"/>
        <end position="486"/>
    </location>
</feature>
<feature type="transmembrane region" description="Helical" evidence="1">
    <location>
        <begin position="512"/>
        <end position="532"/>
    </location>
</feature>
<feature type="transmembrane region" description="Helical" evidence="1">
    <location>
        <begin position="543"/>
        <end position="563"/>
    </location>
</feature>
<feature type="transmembrane region" description="Helical" evidence="1">
    <location>
        <begin position="572"/>
        <end position="592"/>
    </location>
</feature>
<feature type="transmembrane region" description="Helical" evidence="1">
    <location>
        <begin position="680"/>
        <end position="700"/>
    </location>
</feature>
<feature type="transmembrane region" description="Helical" evidence="1">
    <location>
        <begin position="1095"/>
        <end position="1115"/>
    </location>
</feature>
<feature type="transmembrane region" description="Helical" evidence="1">
    <location>
        <begin position="1166"/>
        <end position="1186"/>
    </location>
</feature>
<feature type="transmembrane region" description="Helical" evidence="1">
    <location>
        <begin position="1208"/>
        <end position="1228"/>
    </location>
</feature>
<feature type="transmembrane region" description="Helical" evidence="1">
    <location>
        <begin position="1245"/>
        <end position="1265"/>
    </location>
</feature>
<feature type="transmembrane region" description="Helical" evidence="1">
    <location>
        <begin position="1361"/>
        <end position="1381"/>
    </location>
</feature>
<feature type="domain" description="ABC transporter 1" evidence="2">
    <location>
        <begin position="73"/>
        <end position="320"/>
    </location>
</feature>
<feature type="domain" description="ABC transmembrane type-2 1">
    <location>
        <begin position="412"/>
        <end position="622"/>
    </location>
</feature>
<feature type="domain" description="ABC transporter 2" evidence="2">
    <location>
        <begin position="758"/>
        <end position="1001"/>
    </location>
</feature>
<feature type="domain" description="ABC transmembrane type-2 2">
    <location>
        <begin position="1071"/>
        <end position="1286"/>
    </location>
</feature>
<feature type="region of interest" description="Disordered" evidence="3">
    <location>
        <begin position="1"/>
        <end position="22"/>
    </location>
</feature>
<feature type="binding site" evidence="2">
    <location>
        <begin position="794"/>
        <end position="801"/>
    </location>
    <ligand>
        <name>ATP</name>
        <dbReference type="ChEBI" id="CHEBI:30616"/>
    </ligand>
</feature>
<keyword id="KW-0067">ATP-binding</keyword>
<keyword id="KW-0256">Endoplasmic reticulum</keyword>
<keyword id="KW-0472">Membrane</keyword>
<keyword id="KW-0547">Nucleotide-binding</keyword>
<keyword id="KW-1185">Reference proteome</keyword>
<keyword id="KW-0677">Repeat</keyword>
<keyword id="KW-0812">Transmembrane</keyword>
<keyword id="KW-1133">Transmembrane helix</keyword>
<keyword id="KW-0813">Transport</keyword>
<reference key="1">
    <citation type="journal article" date="2002" name="Nature">
        <title>The genome sequence of Schizosaccharomyces pombe.</title>
        <authorList>
            <person name="Wood V."/>
            <person name="Gwilliam R."/>
            <person name="Rajandream M.A."/>
            <person name="Lyne M.H."/>
            <person name="Lyne R."/>
            <person name="Stewart A."/>
            <person name="Sgouros J.G."/>
            <person name="Peat N."/>
            <person name="Hayles J."/>
            <person name="Baker S.G."/>
            <person name="Basham D."/>
            <person name="Bowman S."/>
            <person name="Brooks K."/>
            <person name="Brown D."/>
            <person name="Brown S."/>
            <person name="Chillingworth T."/>
            <person name="Churcher C.M."/>
            <person name="Collins M."/>
            <person name="Connor R."/>
            <person name="Cronin A."/>
            <person name="Davis P."/>
            <person name="Feltwell T."/>
            <person name="Fraser A."/>
            <person name="Gentles S."/>
            <person name="Goble A."/>
            <person name="Hamlin N."/>
            <person name="Harris D.E."/>
            <person name="Hidalgo J."/>
            <person name="Hodgson G."/>
            <person name="Holroyd S."/>
            <person name="Hornsby T."/>
            <person name="Howarth S."/>
            <person name="Huckle E.J."/>
            <person name="Hunt S."/>
            <person name="Jagels K."/>
            <person name="James K.D."/>
            <person name="Jones L."/>
            <person name="Jones M."/>
            <person name="Leather S."/>
            <person name="McDonald S."/>
            <person name="McLean J."/>
            <person name="Mooney P."/>
            <person name="Moule S."/>
            <person name="Mungall K.L."/>
            <person name="Murphy L.D."/>
            <person name="Niblett D."/>
            <person name="Odell C."/>
            <person name="Oliver K."/>
            <person name="O'Neil S."/>
            <person name="Pearson D."/>
            <person name="Quail M.A."/>
            <person name="Rabbinowitsch E."/>
            <person name="Rutherford K.M."/>
            <person name="Rutter S."/>
            <person name="Saunders D."/>
            <person name="Seeger K."/>
            <person name="Sharp S."/>
            <person name="Skelton J."/>
            <person name="Simmonds M.N."/>
            <person name="Squares R."/>
            <person name="Squares S."/>
            <person name="Stevens K."/>
            <person name="Taylor K."/>
            <person name="Taylor R.G."/>
            <person name="Tivey A."/>
            <person name="Walsh S.V."/>
            <person name="Warren T."/>
            <person name="Whitehead S."/>
            <person name="Woodward J.R."/>
            <person name="Volckaert G."/>
            <person name="Aert R."/>
            <person name="Robben J."/>
            <person name="Grymonprez B."/>
            <person name="Weltjens I."/>
            <person name="Vanstreels E."/>
            <person name="Rieger M."/>
            <person name="Schaefer M."/>
            <person name="Mueller-Auer S."/>
            <person name="Gabel C."/>
            <person name="Fuchs M."/>
            <person name="Duesterhoeft A."/>
            <person name="Fritzc C."/>
            <person name="Holzer E."/>
            <person name="Moestl D."/>
            <person name="Hilbert H."/>
            <person name="Borzym K."/>
            <person name="Langer I."/>
            <person name="Beck A."/>
            <person name="Lehrach H."/>
            <person name="Reinhardt R."/>
            <person name="Pohl T.M."/>
            <person name="Eger P."/>
            <person name="Zimmermann W."/>
            <person name="Wedler H."/>
            <person name="Wambutt R."/>
            <person name="Purnelle B."/>
            <person name="Goffeau A."/>
            <person name="Cadieu E."/>
            <person name="Dreano S."/>
            <person name="Gloux S."/>
            <person name="Lelaure V."/>
            <person name="Mottier S."/>
            <person name="Galibert F."/>
            <person name="Aves S.J."/>
            <person name="Xiang Z."/>
            <person name="Hunt C."/>
            <person name="Moore K."/>
            <person name="Hurst S.M."/>
            <person name="Lucas M."/>
            <person name="Rochet M."/>
            <person name="Gaillardin C."/>
            <person name="Tallada V.A."/>
            <person name="Garzon A."/>
            <person name="Thode G."/>
            <person name="Daga R.R."/>
            <person name="Cruzado L."/>
            <person name="Jimenez J."/>
            <person name="Sanchez M."/>
            <person name="del Rey F."/>
            <person name="Benito J."/>
            <person name="Dominguez A."/>
            <person name="Revuelta J.L."/>
            <person name="Moreno S."/>
            <person name="Armstrong J."/>
            <person name="Forsburg S.L."/>
            <person name="Cerutti L."/>
            <person name="Lowe T."/>
            <person name="McCombie W.R."/>
            <person name="Paulsen I."/>
            <person name="Potashkin J."/>
            <person name="Shpakovski G.V."/>
            <person name="Ussery D."/>
            <person name="Barrell B.G."/>
            <person name="Nurse P."/>
        </authorList>
    </citation>
    <scope>NUCLEOTIDE SEQUENCE [LARGE SCALE GENOMIC DNA]</scope>
    <source>
        <strain>972 / ATCC 24843</strain>
    </source>
</reference>
<reference key="2">
    <citation type="journal article" date="2006" name="Microbiology">
        <title>A survey of all 11 ABC transporters in fission yeast: two novel ABC transporters are required for red pigment accumulation in a Schizosaccharomyces pombe adenine biosynthetic mutant.</title>
        <authorList>
            <person name="Iwaki T."/>
            <person name="Giga-Hama Y."/>
            <person name="Takegawa K."/>
        </authorList>
    </citation>
    <scope>IDENTIFICATION AS AN ABC TRANSPORTER</scope>
    <scope>SUBCELLULAR LOCATION</scope>
</reference>
<dbReference type="EMBL" id="CU329670">
    <property type="protein sequence ID" value="CAC36905.1"/>
    <property type="molecule type" value="Genomic_DNA"/>
</dbReference>
<dbReference type="RefSeq" id="NP_593995.1">
    <property type="nucleotide sequence ID" value="NM_001019421.2"/>
</dbReference>
<dbReference type="SMR" id="Q9C0Y5"/>
<dbReference type="BioGRID" id="279785">
    <property type="interactions" value="12"/>
</dbReference>
<dbReference type="FunCoup" id="Q9C0Y5">
    <property type="interactions" value="6"/>
</dbReference>
<dbReference type="STRING" id="284812.Q9C0Y5"/>
<dbReference type="iPTMnet" id="Q9C0Y5"/>
<dbReference type="PaxDb" id="4896-SPAPB24D3.09c.1"/>
<dbReference type="EnsemblFungi" id="SPAPB24D3.09c.1">
    <property type="protein sequence ID" value="SPAPB24D3.09c.1:pep"/>
    <property type="gene ID" value="SPAPB24D3.09c"/>
</dbReference>
<dbReference type="GeneID" id="2543363"/>
<dbReference type="KEGG" id="spo:2543363"/>
<dbReference type="PomBase" id="SPAPB24D3.09c">
    <property type="gene designation" value="pdr1"/>
</dbReference>
<dbReference type="VEuPathDB" id="FungiDB:SPAPB24D3.09c"/>
<dbReference type="eggNOG" id="KOG0065">
    <property type="taxonomic scope" value="Eukaryota"/>
</dbReference>
<dbReference type="HOGENOM" id="CLU_000604_35_0_1"/>
<dbReference type="InParanoid" id="Q9C0Y5"/>
<dbReference type="OMA" id="HWANVSF"/>
<dbReference type="PhylomeDB" id="Q9C0Y5"/>
<dbReference type="PRO" id="PR:Q9C0Y5"/>
<dbReference type="Proteomes" id="UP000002485">
    <property type="component" value="Chromosome I"/>
</dbReference>
<dbReference type="GO" id="GO:0005783">
    <property type="term" value="C:endoplasmic reticulum"/>
    <property type="evidence" value="ECO:0000314"/>
    <property type="project" value="PomBase"/>
</dbReference>
<dbReference type="GO" id="GO:0005789">
    <property type="term" value="C:endoplasmic reticulum membrane"/>
    <property type="evidence" value="ECO:0007669"/>
    <property type="project" value="UniProtKB-SubCell"/>
</dbReference>
<dbReference type="GO" id="GO:0005886">
    <property type="term" value="C:plasma membrane"/>
    <property type="evidence" value="ECO:0000266"/>
    <property type="project" value="PomBase"/>
</dbReference>
<dbReference type="GO" id="GO:0140359">
    <property type="term" value="F:ABC-type transporter activity"/>
    <property type="evidence" value="ECO:0007669"/>
    <property type="project" value="InterPro"/>
</dbReference>
<dbReference type="GO" id="GO:0005524">
    <property type="term" value="F:ATP binding"/>
    <property type="evidence" value="ECO:0007669"/>
    <property type="project" value="UniProtKB-KW"/>
</dbReference>
<dbReference type="GO" id="GO:0016887">
    <property type="term" value="F:ATP hydrolysis activity"/>
    <property type="evidence" value="ECO:0000305"/>
    <property type="project" value="PomBase"/>
</dbReference>
<dbReference type="GO" id="GO:0055085">
    <property type="term" value="P:transmembrane transport"/>
    <property type="evidence" value="ECO:0000255"/>
    <property type="project" value="PomBase"/>
</dbReference>
<dbReference type="CDD" id="cd03233">
    <property type="entry name" value="ABCG_PDR_domain1"/>
    <property type="match status" value="1"/>
</dbReference>
<dbReference type="CDD" id="cd03232">
    <property type="entry name" value="ABCG_PDR_domain2"/>
    <property type="match status" value="1"/>
</dbReference>
<dbReference type="FunFam" id="3.40.50.300:FF:004479">
    <property type="entry name" value="ATP-binding cassette transporter pdr1"/>
    <property type="match status" value="1"/>
</dbReference>
<dbReference type="Gene3D" id="3.40.50.300">
    <property type="entry name" value="P-loop containing nucleotide triphosphate hydrolases"/>
    <property type="match status" value="2"/>
</dbReference>
<dbReference type="InterPro" id="IPR003593">
    <property type="entry name" value="AAA+_ATPase"/>
</dbReference>
<dbReference type="InterPro" id="IPR013525">
    <property type="entry name" value="ABC2_TM"/>
</dbReference>
<dbReference type="InterPro" id="IPR003439">
    <property type="entry name" value="ABC_transporter-like_ATP-bd"/>
</dbReference>
<dbReference type="InterPro" id="IPR034001">
    <property type="entry name" value="ABCG_PDR_1"/>
</dbReference>
<dbReference type="InterPro" id="IPR034003">
    <property type="entry name" value="ABCG_PDR_2"/>
</dbReference>
<dbReference type="InterPro" id="IPR027417">
    <property type="entry name" value="P-loop_NTPase"/>
</dbReference>
<dbReference type="InterPro" id="IPR010929">
    <property type="entry name" value="PDR_CDR_ABC"/>
</dbReference>
<dbReference type="PANTHER" id="PTHR19241">
    <property type="entry name" value="ATP-BINDING CASSETTE TRANSPORTER"/>
    <property type="match status" value="1"/>
</dbReference>
<dbReference type="Pfam" id="PF01061">
    <property type="entry name" value="ABC2_membrane"/>
    <property type="match status" value="2"/>
</dbReference>
<dbReference type="Pfam" id="PF00005">
    <property type="entry name" value="ABC_tran"/>
    <property type="match status" value="2"/>
</dbReference>
<dbReference type="Pfam" id="PF06422">
    <property type="entry name" value="PDR_CDR"/>
    <property type="match status" value="2"/>
</dbReference>
<dbReference type="SMART" id="SM00382">
    <property type="entry name" value="AAA"/>
    <property type="match status" value="2"/>
</dbReference>
<dbReference type="SUPFAM" id="SSF52540">
    <property type="entry name" value="P-loop containing nucleoside triphosphate hydrolases"/>
    <property type="match status" value="2"/>
</dbReference>
<dbReference type="PROSITE" id="PS50893">
    <property type="entry name" value="ABC_TRANSPORTER_2"/>
    <property type="match status" value="2"/>
</dbReference>
<protein>
    <recommendedName>
        <fullName>ATP-binding cassette transporter pdr1</fullName>
        <shortName>ABC transporter pdr1</shortName>
    </recommendedName>
</protein>
<organism>
    <name type="scientific">Schizosaccharomyces pombe (strain 972 / ATCC 24843)</name>
    <name type="common">Fission yeast</name>
    <dbReference type="NCBI Taxonomy" id="284812"/>
    <lineage>
        <taxon>Eukaryota</taxon>
        <taxon>Fungi</taxon>
        <taxon>Dikarya</taxon>
        <taxon>Ascomycota</taxon>
        <taxon>Taphrinomycotina</taxon>
        <taxon>Schizosaccharomycetes</taxon>
        <taxon>Schizosaccharomycetales</taxon>
        <taxon>Schizosaccharomycetaceae</taxon>
        <taxon>Schizosaccharomyces</taxon>
    </lineage>
</organism>
<name>PDR1_SCHPO</name>
<proteinExistence type="inferred from homology"/>
<sequence length="1396" mass="159319">MSEQEKGKGDLDDPNSKNTKCPDKFEQKVEEYLEVLNELHLTGRTSGFCMRNFTVEGAFNPKFQIRSFFAQLLHPINIIFRTGPKRDIIPLVKGFDGYLQPGSSLLVLGHEGSGGSTLLKALCGIVEENERLNGSLHYDGLDYKIAHSQFKADLSYCGEGHSKVATITVRRLLEFVCSCRLPASKYDHPRSHYIRRICEIIRDAFDLGDFYNHRILRVFNSGDQIKVDVAQTMCARPLIQCWDNNMRDFDSISVIDILSRIKVLSHKLGTTLVAIVSQASDRIFHMFDMVTLMYEGEQIFYGPTSRLKPYFLDLGFIPAKHSTTVEFVTSLTYPEMRIINKKHQGFIPSTPAEFRECWLRSEDYAKLIKFMDRYEENHSDIHAFKDAKFDQTRLQKFLRWLNSNPCLIPYRLQVFATAKVTFFQYLHDYSYIATFVFTYVFQALMLGSLFYNLRNESSELYSRGSVLSNAIVFTAIQTMSEVDIIFLKKSLFKEHRVQSLYHPSAALMGSSLVEFPMRIVVVTMYDIIVYFLSDLKRNARSFFIFYLFTIVITFCMSAVFRFIALLSTTAEIAALIGGIGALVLIIFCGAVMPVQYIGWWFRWIAYANPVNYGYESIMLNEFDGREIPCSLMAPAPDTAPIENNFCLATAGRTGTSIVSGYQYLQVVYQYKADFLWRNCGIILGFAIFILASSLILANFIRYDRESVHIPEFQKRKSYSQVASSFLIEPQDKPPSQTEPDNKKVDVSTTLSTNDNLVLCWRDLNFTVVTKTSKKQILTNVSGYLKKNTLTALLGENKSGKSVLLRILSQRGIAGSVEGEITLSGLKNPKNLRKRIGYVRKNPLFISEYTVRETLRLHAALRQSKQRSLSEQYAYVEYVIDFLGLGEVADFIVGDMGKGLSLYHKRLLSIAVELSARPGSILLLDEPANGLDSQSAWMLVCILQKLARSGLSILCSVSQPSSRILELFDMMLILDLNGNTVYYDTMGRDLSKLVNYFKRIHGTNEHSKDTADFVLHCIQFLKQGPEFDYAGAWASTNTHKQIIEHVNFIMDNPELTDDDFPNETRFMTSFFFQIYKISMRNFVAYWRDSSLLRARVAFNIVAGLIIGFSFYKQGVGVEETQNKMFSAYMLTVASTSTMNGLQPKFIYFRSIYEQYEQNTAIYSRTAFIIAFFLVEAVINCCFATLFFFGWYYPSGFYEFNHNIPFYGGFAWLMLMIFTLYYTTLGIGIATISPSIGTASIISGTAFVFIQYFNGMIQLPGVIVGFWKWMDALSPYKYFLEGMIGGVLHDAPITCEKFEIHYVDPPPNYSCGEYFSSFLNSSGHGIVYNPEAYSSCQYCPYKNADELMVGFGYHYNHKWRNFCIMIGYTAFNLGAAIALYYIIHKTPWKRLAARFVPD</sequence>
<accession>Q9C0Y5</accession>
<comment type="subcellular location">
    <subcellularLocation>
        <location evidence="4">Endoplasmic reticulum membrane</location>
        <topology evidence="4">Multi-pass membrane protein</topology>
    </subcellularLocation>
</comment>
<comment type="similarity">
    <text evidence="5">Belongs to the ABC transporter superfamily. ABCG family. PDR (TC 3.A.1.205) subfamily.</text>
</comment>
<gene>
    <name type="primary">pdr1</name>
    <name type="ORF">SPAPB24D3.09c</name>
</gene>